<keyword id="KW-0066">ATP synthesis</keyword>
<keyword id="KW-0067">ATP-binding</keyword>
<keyword id="KW-1003">Cell membrane</keyword>
<keyword id="KW-0139">CF(1)</keyword>
<keyword id="KW-0375">Hydrogen ion transport</keyword>
<keyword id="KW-0406">Ion transport</keyword>
<keyword id="KW-0472">Membrane</keyword>
<keyword id="KW-0547">Nucleotide-binding</keyword>
<keyword id="KW-1278">Translocase</keyword>
<keyword id="KW-0813">Transport</keyword>
<sequence length="468" mass="50934">MSSGKIAQVIGPVVDVLFAAGEKLPEINNALVVYKNDERKTKIVLEVALELGDGMVRTIAMESTDGLTRGMEVLDTGRPISVPVGKETLGRVFNVLGDTIDLEAPFTEDAERQPIHKKAPTFDELSTSSEILETGIKVIDLLAPYLKGGKVGLFGGAGVGKTVLIQELIHNIAQEHGGISVFTGVGERTREGNDLYWEMKESGVIEKTAMVFGQMNEPPGARMRVALTGLTIAEYFRDVEGQDVLLFIDNIFRFTQAGSEVSALLGRMPSAVGYQPTLATEMGQLQERITSTKKGSVTSIQAIYVPADDYTDPAPATAFAHLDSTTNLERKLVQLGIYPAVDPLASSSRALAPEIVGEEHYAVAAEVKRVLQRYHELQDIIAILGMDELSDEEKTLVARARRIQFFLSQNFNVAEQFTGQPGSYVPVAETVRGFKEILDGKYDHLPEDAFRGVGSIEDVIAKAEKMGF</sequence>
<protein>
    <recommendedName>
        <fullName evidence="1">ATP synthase subunit beta</fullName>
        <ecNumber evidence="1">7.1.2.2</ecNumber>
    </recommendedName>
    <alternativeName>
        <fullName evidence="1">ATP synthase F1 sector subunit beta</fullName>
    </alternativeName>
    <alternativeName>
        <fullName evidence="1">F-ATPase subunit beta</fullName>
    </alternativeName>
</protein>
<comment type="function">
    <text evidence="1">Produces ATP from ADP in the presence of a proton gradient across the membrane. The catalytic sites are hosted primarily by the beta subunits.</text>
</comment>
<comment type="catalytic activity">
    <reaction evidence="1">
        <text>ATP + H2O + 4 H(+)(in) = ADP + phosphate + 5 H(+)(out)</text>
        <dbReference type="Rhea" id="RHEA:57720"/>
        <dbReference type="ChEBI" id="CHEBI:15377"/>
        <dbReference type="ChEBI" id="CHEBI:15378"/>
        <dbReference type="ChEBI" id="CHEBI:30616"/>
        <dbReference type="ChEBI" id="CHEBI:43474"/>
        <dbReference type="ChEBI" id="CHEBI:456216"/>
        <dbReference type="EC" id="7.1.2.2"/>
    </reaction>
</comment>
<comment type="subunit">
    <text evidence="1">F-type ATPases have 2 components, CF(1) - the catalytic core - and CF(0) - the membrane proton channel. CF(1) has five subunits: alpha(3), beta(3), gamma(1), delta(1), epsilon(1). CF(0) has three main subunits: a(1), b(2) and c(9-12). The alpha and beta chains form an alternating ring which encloses part of the gamma chain. CF(1) is attached to CF(0) by a central stalk formed by the gamma and epsilon chains, while a peripheral stalk is formed by the delta and b chains.</text>
</comment>
<comment type="subcellular location">
    <subcellularLocation>
        <location evidence="1">Cell membrane</location>
        <topology evidence="1">Peripheral membrane protein</topology>
    </subcellularLocation>
</comment>
<comment type="similarity">
    <text evidence="1">Belongs to the ATPase alpha/beta chains family.</text>
</comment>
<organism>
    <name type="scientific">Streptococcus pneumoniae (strain 70585)</name>
    <dbReference type="NCBI Taxonomy" id="488221"/>
    <lineage>
        <taxon>Bacteria</taxon>
        <taxon>Bacillati</taxon>
        <taxon>Bacillota</taxon>
        <taxon>Bacilli</taxon>
        <taxon>Lactobacillales</taxon>
        <taxon>Streptococcaceae</taxon>
        <taxon>Streptococcus</taxon>
    </lineage>
</organism>
<name>ATPB_STRP7</name>
<evidence type="ECO:0000255" key="1">
    <source>
        <dbReference type="HAMAP-Rule" id="MF_01347"/>
    </source>
</evidence>
<dbReference type="EC" id="7.1.2.2" evidence="1"/>
<dbReference type="EMBL" id="CP000918">
    <property type="protein sequence ID" value="ACO17401.1"/>
    <property type="molecule type" value="Genomic_DNA"/>
</dbReference>
<dbReference type="RefSeq" id="WP_000094360.1">
    <property type="nucleotide sequence ID" value="NC_012468.1"/>
</dbReference>
<dbReference type="SMR" id="C1C899"/>
<dbReference type="GeneID" id="45653253"/>
<dbReference type="KEGG" id="snm:SP70585_1545"/>
<dbReference type="HOGENOM" id="CLU_022398_0_2_9"/>
<dbReference type="Proteomes" id="UP000002211">
    <property type="component" value="Chromosome"/>
</dbReference>
<dbReference type="GO" id="GO:0005886">
    <property type="term" value="C:plasma membrane"/>
    <property type="evidence" value="ECO:0007669"/>
    <property type="project" value="UniProtKB-SubCell"/>
</dbReference>
<dbReference type="GO" id="GO:0045259">
    <property type="term" value="C:proton-transporting ATP synthase complex"/>
    <property type="evidence" value="ECO:0007669"/>
    <property type="project" value="UniProtKB-KW"/>
</dbReference>
<dbReference type="GO" id="GO:0005524">
    <property type="term" value="F:ATP binding"/>
    <property type="evidence" value="ECO:0007669"/>
    <property type="project" value="UniProtKB-UniRule"/>
</dbReference>
<dbReference type="GO" id="GO:0016887">
    <property type="term" value="F:ATP hydrolysis activity"/>
    <property type="evidence" value="ECO:0007669"/>
    <property type="project" value="InterPro"/>
</dbReference>
<dbReference type="GO" id="GO:0046933">
    <property type="term" value="F:proton-transporting ATP synthase activity, rotational mechanism"/>
    <property type="evidence" value="ECO:0007669"/>
    <property type="project" value="UniProtKB-UniRule"/>
</dbReference>
<dbReference type="CDD" id="cd18110">
    <property type="entry name" value="ATP-synt_F1_beta_C"/>
    <property type="match status" value="1"/>
</dbReference>
<dbReference type="CDD" id="cd18115">
    <property type="entry name" value="ATP-synt_F1_beta_N"/>
    <property type="match status" value="1"/>
</dbReference>
<dbReference type="CDD" id="cd01133">
    <property type="entry name" value="F1-ATPase_beta_CD"/>
    <property type="match status" value="1"/>
</dbReference>
<dbReference type="FunFam" id="1.10.1140.10:FF:000001">
    <property type="entry name" value="ATP synthase subunit beta"/>
    <property type="match status" value="1"/>
</dbReference>
<dbReference type="FunFam" id="2.40.10.170:FF:000005">
    <property type="entry name" value="ATP synthase subunit beta"/>
    <property type="match status" value="1"/>
</dbReference>
<dbReference type="FunFam" id="3.40.50.300:FF:000004">
    <property type="entry name" value="ATP synthase subunit beta"/>
    <property type="match status" value="1"/>
</dbReference>
<dbReference type="Gene3D" id="2.40.10.170">
    <property type="match status" value="1"/>
</dbReference>
<dbReference type="Gene3D" id="1.10.1140.10">
    <property type="entry name" value="Bovine Mitochondrial F1-atpase, Atp Synthase Beta Chain, Chain D, domain 3"/>
    <property type="match status" value="1"/>
</dbReference>
<dbReference type="Gene3D" id="3.40.50.300">
    <property type="entry name" value="P-loop containing nucleotide triphosphate hydrolases"/>
    <property type="match status" value="1"/>
</dbReference>
<dbReference type="HAMAP" id="MF_01347">
    <property type="entry name" value="ATP_synth_beta_bact"/>
    <property type="match status" value="1"/>
</dbReference>
<dbReference type="InterPro" id="IPR003593">
    <property type="entry name" value="AAA+_ATPase"/>
</dbReference>
<dbReference type="InterPro" id="IPR055190">
    <property type="entry name" value="ATP-synt_VA_C"/>
</dbReference>
<dbReference type="InterPro" id="IPR005722">
    <property type="entry name" value="ATP_synth_F1_bsu"/>
</dbReference>
<dbReference type="InterPro" id="IPR020003">
    <property type="entry name" value="ATPase_a/bsu_AS"/>
</dbReference>
<dbReference type="InterPro" id="IPR050053">
    <property type="entry name" value="ATPase_alpha/beta_chains"/>
</dbReference>
<dbReference type="InterPro" id="IPR004100">
    <property type="entry name" value="ATPase_F1/V1/A1_a/bsu_N"/>
</dbReference>
<dbReference type="InterPro" id="IPR036121">
    <property type="entry name" value="ATPase_F1/V1/A1_a/bsu_N_sf"/>
</dbReference>
<dbReference type="InterPro" id="IPR000194">
    <property type="entry name" value="ATPase_F1/V1/A1_a/bsu_nucl-bd"/>
</dbReference>
<dbReference type="InterPro" id="IPR024034">
    <property type="entry name" value="ATPase_F1/V1_b/a_C"/>
</dbReference>
<dbReference type="InterPro" id="IPR027417">
    <property type="entry name" value="P-loop_NTPase"/>
</dbReference>
<dbReference type="NCBIfam" id="TIGR01039">
    <property type="entry name" value="atpD"/>
    <property type="match status" value="1"/>
</dbReference>
<dbReference type="PANTHER" id="PTHR15184">
    <property type="entry name" value="ATP SYNTHASE"/>
    <property type="match status" value="1"/>
</dbReference>
<dbReference type="PANTHER" id="PTHR15184:SF71">
    <property type="entry name" value="ATP SYNTHASE SUBUNIT BETA, MITOCHONDRIAL"/>
    <property type="match status" value="1"/>
</dbReference>
<dbReference type="Pfam" id="PF00006">
    <property type="entry name" value="ATP-synt_ab"/>
    <property type="match status" value="1"/>
</dbReference>
<dbReference type="Pfam" id="PF02874">
    <property type="entry name" value="ATP-synt_ab_N"/>
    <property type="match status" value="1"/>
</dbReference>
<dbReference type="Pfam" id="PF22919">
    <property type="entry name" value="ATP-synt_VA_C"/>
    <property type="match status" value="1"/>
</dbReference>
<dbReference type="SMART" id="SM00382">
    <property type="entry name" value="AAA"/>
    <property type="match status" value="1"/>
</dbReference>
<dbReference type="SUPFAM" id="SSF47917">
    <property type="entry name" value="C-terminal domain of alpha and beta subunits of F1 ATP synthase"/>
    <property type="match status" value="1"/>
</dbReference>
<dbReference type="SUPFAM" id="SSF50615">
    <property type="entry name" value="N-terminal domain of alpha and beta subunits of F1 ATP synthase"/>
    <property type="match status" value="1"/>
</dbReference>
<dbReference type="SUPFAM" id="SSF52540">
    <property type="entry name" value="P-loop containing nucleoside triphosphate hydrolases"/>
    <property type="match status" value="1"/>
</dbReference>
<dbReference type="PROSITE" id="PS00152">
    <property type="entry name" value="ATPASE_ALPHA_BETA"/>
    <property type="match status" value="1"/>
</dbReference>
<reference key="1">
    <citation type="journal article" date="2010" name="Genome Biol.">
        <title>Structure and dynamics of the pan-genome of Streptococcus pneumoniae and closely related species.</title>
        <authorList>
            <person name="Donati C."/>
            <person name="Hiller N.L."/>
            <person name="Tettelin H."/>
            <person name="Muzzi A."/>
            <person name="Croucher N.J."/>
            <person name="Angiuoli S.V."/>
            <person name="Oggioni M."/>
            <person name="Dunning Hotopp J.C."/>
            <person name="Hu F.Z."/>
            <person name="Riley D.R."/>
            <person name="Covacci A."/>
            <person name="Mitchell T.J."/>
            <person name="Bentley S.D."/>
            <person name="Kilian M."/>
            <person name="Ehrlich G.D."/>
            <person name="Rappuoli R."/>
            <person name="Moxon E.R."/>
            <person name="Masignani V."/>
        </authorList>
    </citation>
    <scope>NUCLEOTIDE SEQUENCE [LARGE SCALE GENOMIC DNA]</scope>
    <source>
        <strain>70585</strain>
    </source>
</reference>
<feature type="chain" id="PRO_1000214833" description="ATP synthase subunit beta">
    <location>
        <begin position="1"/>
        <end position="468"/>
    </location>
</feature>
<feature type="binding site" evidence="1">
    <location>
        <begin position="155"/>
        <end position="162"/>
    </location>
    <ligand>
        <name>ATP</name>
        <dbReference type="ChEBI" id="CHEBI:30616"/>
    </ligand>
</feature>
<gene>
    <name evidence="1" type="primary">atpD</name>
    <name type="ordered locus">SP70585_1545</name>
</gene>
<proteinExistence type="inferred from homology"/>
<accession>C1C899</accession>